<keyword id="KW-0028">Amino-acid biosynthesis</keyword>
<keyword id="KW-0032">Aminotransferase</keyword>
<keyword id="KW-0368">Histidine biosynthesis</keyword>
<keyword id="KW-0663">Pyridoxal phosphate</keyword>
<keyword id="KW-0808">Transferase</keyword>
<organism>
    <name type="scientific">Campylobacter concisus (strain 13826)</name>
    <dbReference type="NCBI Taxonomy" id="360104"/>
    <lineage>
        <taxon>Bacteria</taxon>
        <taxon>Pseudomonadati</taxon>
        <taxon>Campylobacterota</taxon>
        <taxon>Epsilonproteobacteria</taxon>
        <taxon>Campylobacterales</taxon>
        <taxon>Campylobacteraceae</taxon>
        <taxon>Campylobacter</taxon>
    </lineage>
</organism>
<evidence type="ECO:0000255" key="1">
    <source>
        <dbReference type="HAMAP-Rule" id="MF_01023"/>
    </source>
</evidence>
<feature type="chain" id="PRO_1000072942" description="Histidinol-phosphate aminotransferase">
    <location>
        <begin position="1"/>
        <end position="365"/>
    </location>
</feature>
<feature type="modified residue" description="N6-(pyridoxal phosphate)lysine" evidence="1">
    <location>
        <position position="227"/>
    </location>
</feature>
<name>HIS8_CAMC1</name>
<proteinExistence type="inferred from homology"/>
<accession>A7ZCF3</accession>
<gene>
    <name evidence="1" type="primary">hisC</name>
    <name type="ordered locus">Ccon26_05690</name>
    <name type="ORF">CCC13826_1590</name>
</gene>
<protein>
    <recommendedName>
        <fullName evidence="1">Histidinol-phosphate aminotransferase</fullName>
        <ecNumber evidence="1">2.6.1.9</ecNumber>
    </recommendedName>
    <alternativeName>
        <fullName evidence="1">Imidazole acetol-phosphate transaminase</fullName>
    </alternativeName>
</protein>
<dbReference type="EC" id="2.6.1.9" evidence="1"/>
<dbReference type="EMBL" id="CP000792">
    <property type="protein sequence ID" value="EAT99008.1"/>
    <property type="molecule type" value="Genomic_DNA"/>
</dbReference>
<dbReference type="RefSeq" id="WP_012001433.1">
    <property type="nucleotide sequence ID" value="NC_009802.2"/>
</dbReference>
<dbReference type="SMR" id="A7ZCF3"/>
<dbReference type="STRING" id="360104.CCC13826_1590"/>
<dbReference type="KEGG" id="cco:CCC13826_1590"/>
<dbReference type="eggNOG" id="COG0079">
    <property type="taxonomic scope" value="Bacteria"/>
</dbReference>
<dbReference type="HOGENOM" id="CLU_017584_3_3_7"/>
<dbReference type="OrthoDB" id="9813612at2"/>
<dbReference type="UniPathway" id="UPA00031">
    <property type="reaction ID" value="UER00012"/>
</dbReference>
<dbReference type="Proteomes" id="UP000001121">
    <property type="component" value="Chromosome"/>
</dbReference>
<dbReference type="GO" id="GO:0004400">
    <property type="term" value="F:histidinol-phosphate transaminase activity"/>
    <property type="evidence" value="ECO:0007669"/>
    <property type="project" value="UniProtKB-UniRule"/>
</dbReference>
<dbReference type="GO" id="GO:0030170">
    <property type="term" value="F:pyridoxal phosphate binding"/>
    <property type="evidence" value="ECO:0007669"/>
    <property type="project" value="InterPro"/>
</dbReference>
<dbReference type="GO" id="GO:0000105">
    <property type="term" value="P:L-histidine biosynthetic process"/>
    <property type="evidence" value="ECO:0007669"/>
    <property type="project" value="UniProtKB-UniRule"/>
</dbReference>
<dbReference type="CDD" id="cd00609">
    <property type="entry name" value="AAT_like"/>
    <property type="match status" value="1"/>
</dbReference>
<dbReference type="Gene3D" id="3.90.1150.10">
    <property type="entry name" value="Aspartate Aminotransferase, domain 1"/>
    <property type="match status" value="1"/>
</dbReference>
<dbReference type="Gene3D" id="3.40.640.10">
    <property type="entry name" value="Type I PLP-dependent aspartate aminotransferase-like (Major domain)"/>
    <property type="match status" value="1"/>
</dbReference>
<dbReference type="HAMAP" id="MF_01023">
    <property type="entry name" value="HisC_aminotrans_2"/>
    <property type="match status" value="1"/>
</dbReference>
<dbReference type="InterPro" id="IPR001917">
    <property type="entry name" value="Aminotrans_II_pyridoxalP_BS"/>
</dbReference>
<dbReference type="InterPro" id="IPR004839">
    <property type="entry name" value="Aminotransferase_I/II_large"/>
</dbReference>
<dbReference type="InterPro" id="IPR005861">
    <property type="entry name" value="HisP_aminotrans"/>
</dbReference>
<dbReference type="InterPro" id="IPR050106">
    <property type="entry name" value="HistidinolP_aminotransfase"/>
</dbReference>
<dbReference type="InterPro" id="IPR015424">
    <property type="entry name" value="PyrdxlP-dep_Trfase"/>
</dbReference>
<dbReference type="InterPro" id="IPR015421">
    <property type="entry name" value="PyrdxlP-dep_Trfase_major"/>
</dbReference>
<dbReference type="InterPro" id="IPR015422">
    <property type="entry name" value="PyrdxlP-dep_Trfase_small"/>
</dbReference>
<dbReference type="NCBIfam" id="TIGR01141">
    <property type="entry name" value="hisC"/>
    <property type="match status" value="1"/>
</dbReference>
<dbReference type="PANTHER" id="PTHR43643:SF3">
    <property type="entry name" value="HISTIDINOL-PHOSPHATE AMINOTRANSFERASE"/>
    <property type="match status" value="1"/>
</dbReference>
<dbReference type="PANTHER" id="PTHR43643">
    <property type="entry name" value="HISTIDINOL-PHOSPHATE AMINOTRANSFERASE 2"/>
    <property type="match status" value="1"/>
</dbReference>
<dbReference type="Pfam" id="PF00155">
    <property type="entry name" value="Aminotran_1_2"/>
    <property type="match status" value="1"/>
</dbReference>
<dbReference type="SUPFAM" id="SSF53383">
    <property type="entry name" value="PLP-dependent transferases"/>
    <property type="match status" value="1"/>
</dbReference>
<dbReference type="PROSITE" id="PS00599">
    <property type="entry name" value="AA_TRANSFER_CLASS_2"/>
    <property type="match status" value="1"/>
</dbReference>
<reference key="1">
    <citation type="submission" date="2007-10" db="EMBL/GenBank/DDBJ databases">
        <title>Genome sequence of Campylobacter concisus 13826 isolated from human feces.</title>
        <authorList>
            <person name="Fouts D.E."/>
            <person name="Mongodin E.F."/>
            <person name="Puiu D."/>
            <person name="Sebastian Y."/>
            <person name="Miller W.G."/>
            <person name="Mandrell R.E."/>
            <person name="On S."/>
            <person name="Nelson K.E."/>
        </authorList>
    </citation>
    <scope>NUCLEOTIDE SEQUENCE [LARGE SCALE GENOMIC DNA]</scope>
    <source>
        <strain>13826</strain>
    </source>
</reference>
<comment type="catalytic activity">
    <reaction evidence="1">
        <text>L-histidinol phosphate + 2-oxoglutarate = 3-(imidazol-4-yl)-2-oxopropyl phosphate + L-glutamate</text>
        <dbReference type="Rhea" id="RHEA:23744"/>
        <dbReference type="ChEBI" id="CHEBI:16810"/>
        <dbReference type="ChEBI" id="CHEBI:29985"/>
        <dbReference type="ChEBI" id="CHEBI:57766"/>
        <dbReference type="ChEBI" id="CHEBI:57980"/>
        <dbReference type="EC" id="2.6.1.9"/>
    </reaction>
</comment>
<comment type="cofactor">
    <cofactor evidence="1">
        <name>pyridoxal 5'-phosphate</name>
        <dbReference type="ChEBI" id="CHEBI:597326"/>
    </cofactor>
</comment>
<comment type="pathway">
    <text evidence="1">Amino-acid biosynthesis; L-histidine biosynthesis; L-histidine from 5-phospho-alpha-D-ribose 1-diphosphate: step 7/9.</text>
</comment>
<comment type="subunit">
    <text evidence="1">Homodimer.</text>
</comment>
<comment type="similarity">
    <text evidence="1">Belongs to the class-II pyridoxal-phosphate-dependent aminotransferase family. Histidinol-phosphate aminotransferase subfamily.</text>
</comment>
<sequence>MKFNDFLDDLVNYEAGKPIELVVREFGIDAKDVIKLASNENPFGTSKRVEEALKEVAKNAHLYPDDSYFELKEGLAKKFGVTSKKLIIGSGSDQIIEFALHAKANRQSGVLMAGVTFAMYEIYAKQTGAKIYRTKSVEHNLSEFLEIYNAHKDEISVIFLCLPNNPLGECIDADEVYKFIKNIDENTLVVLDCAYNEFAKFKDSKKEIKPSEVVKFKNAIYLGTFSKAYALGGMRVGYGVANEEIIGALSKLRAPFNITTPSLRAAIVALGDDEFVQKTMQNNFEQMKRYEDFAEQNGIEFIPSYTNFITFKFNEPKSSQICEKMLKKGIILRDLKSYALNAVRITIGQAWQNDRVFEELEQILK</sequence>